<name>TI214_NUPAD</name>
<dbReference type="EMBL" id="DQ354691">
    <property type="protein sequence ID" value="ABC60517.1"/>
    <property type="molecule type" value="Genomic_DNA"/>
</dbReference>
<dbReference type="RefSeq" id="YP_001001592.1">
    <property type="nucleotide sequence ID" value="NC_008788.1"/>
</dbReference>
<dbReference type="GeneID" id="4699575"/>
<dbReference type="GO" id="GO:0009706">
    <property type="term" value="C:chloroplast inner membrane"/>
    <property type="evidence" value="ECO:0007669"/>
    <property type="project" value="UniProtKB-SubCell"/>
</dbReference>
<dbReference type="GO" id="GO:0015031">
    <property type="term" value="P:protein transport"/>
    <property type="evidence" value="ECO:0007669"/>
    <property type="project" value="UniProtKB-KW"/>
</dbReference>
<dbReference type="InterPro" id="IPR008896">
    <property type="entry name" value="TIC214"/>
</dbReference>
<dbReference type="PANTHER" id="PTHR33163:SF40">
    <property type="entry name" value="PROTEIN TIC 214"/>
    <property type="match status" value="1"/>
</dbReference>
<dbReference type="PANTHER" id="PTHR33163">
    <property type="entry name" value="PROTEIN TIC 214-RELATED"/>
    <property type="match status" value="1"/>
</dbReference>
<dbReference type="Pfam" id="PF05758">
    <property type="entry name" value="Ycf1"/>
    <property type="match status" value="2"/>
</dbReference>
<geneLocation type="chloroplast"/>
<proteinExistence type="inferred from homology"/>
<organism>
    <name type="scientific">Nuphar advena</name>
    <name type="common">Common spatterdock</name>
    <name type="synonym">Nuphar lutea subsp. advena</name>
    <dbReference type="NCBI Taxonomy" id="77108"/>
    <lineage>
        <taxon>Eukaryota</taxon>
        <taxon>Viridiplantae</taxon>
        <taxon>Streptophyta</taxon>
        <taxon>Embryophyta</taxon>
        <taxon>Tracheophyta</taxon>
        <taxon>Spermatophyta</taxon>
        <taxon>Magnoliopsida</taxon>
        <taxon>Nymphaeales</taxon>
        <taxon>Nymphaeaceae</taxon>
        <taxon>Nuphar</taxon>
    </lineage>
</organism>
<comment type="function">
    <text evidence="1">Involved in protein precursor import into chloroplasts. May be part of an intermediate translocation complex acting as a protein-conducting channel at the inner envelope.</text>
</comment>
<comment type="subunit">
    <text evidence="1">Part of the Tic complex.</text>
</comment>
<comment type="subcellular location">
    <subcellularLocation>
        <location evidence="1">Plastid</location>
        <location evidence="1">Chloroplast inner membrane</location>
        <topology evidence="2">Multi-pass membrane protein</topology>
    </subcellularLocation>
</comment>
<comment type="similarity">
    <text evidence="4">Belongs to the TIC214 family.</text>
</comment>
<feature type="chain" id="PRO_0000326582" description="Protein TIC 214">
    <location>
        <begin position="1"/>
        <end position="1868"/>
    </location>
</feature>
<feature type="transmembrane region" description="Helical" evidence="2">
    <location>
        <begin position="11"/>
        <end position="31"/>
    </location>
</feature>
<feature type="transmembrane region" description="Helical" evidence="2">
    <location>
        <begin position="64"/>
        <end position="84"/>
    </location>
</feature>
<feature type="transmembrane region" description="Helical" evidence="2">
    <location>
        <begin position="87"/>
        <end position="107"/>
    </location>
</feature>
<feature type="transmembrane region" description="Helical" evidence="2">
    <location>
        <begin position="126"/>
        <end position="146"/>
    </location>
</feature>
<feature type="transmembrane region" description="Helical" evidence="2">
    <location>
        <begin position="166"/>
        <end position="186"/>
    </location>
</feature>
<feature type="transmembrane region" description="Helical" evidence="2">
    <location>
        <begin position="221"/>
        <end position="241"/>
    </location>
</feature>
<feature type="region of interest" description="Disordered" evidence="3">
    <location>
        <begin position="248"/>
        <end position="277"/>
    </location>
</feature>
<feature type="region of interest" description="Disordered" evidence="3">
    <location>
        <begin position="617"/>
        <end position="643"/>
    </location>
</feature>
<feature type="region of interest" description="Disordered" evidence="3">
    <location>
        <begin position="658"/>
        <end position="700"/>
    </location>
</feature>
<feature type="region of interest" description="Disordered" evidence="3">
    <location>
        <begin position="782"/>
        <end position="806"/>
    </location>
</feature>
<feature type="region of interest" description="Disordered" evidence="3">
    <location>
        <begin position="1537"/>
        <end position="1607"/>
    </location>
</feature>
<feature type="compositionally biased region" description="Basic and acidic residues" evidence="3">
    <location>
        <begin position="248"/>
        <end position="276"/>
    </location>
</feature>
<feature type="compositionally biased region" description="Acidic residues" evidence="3">
    <location>
        <begin position="617"/>
        <end position="636"/>
    </location>
</feature>
<feature type="compositionally biased region" description="Polar residues" evidence="3">
    <location>
        <begin position="674"/>
        <end position="683"/>
    </location>
</feature>
<feature type="compositionally biased region" description="Basic and acidic residues" evidence="3">
    <location>
        <begin position="684"/>
        <end position="700"/>
    </location>
</feature>
<feature type="compositionally biased region" description="Basic and acidic residues" evidence="3">
    <location>
        <begin position="789"/>
        <end position="806"/>
    </location>
</feature>
<feature type="compositionally biased region" description="Basic and acidic residues" evidence="3">
    <location>
        <begin position="1537"/>
        <end position="1576"/>
    </location>
</feature>
<protein>
    <recommendedName>
        <fullName evidence="1">Protein TIC 214</fullName>
    </recommendedName>
    <alternativeName>
        <fullName evidence="1">Translocon at the inner envelope membrane of chloroplasts 214</fullName>
        <shortName evidence="1">AtTIC214</shortName>
    </alternativeName>
</protein>
<sequence length="1868" mass="222222">MILKYSLLGNLLLLWMNIVNSVVLVGLYYGFLTTFSIGPSYLLLLRTRVMKEGSEKEVSATTAFIMGQFIIFISTYYPPLHLALSRPHTLTVLVLPYLLLHFLFFWNNHKSLFDHRSTHGNFIPNLSIQYVFLNNLIFQLFNHFILPSSTLTRLVDISMFRCNNKILFVISSFFGWLIGHILLMKSIGLVLSWPWEKMRSNALFRSNKYLVSKWRNSVSQIFSILLFITCVCYLGRMPSPIITKKLKESSKGEEKKKTEKERDVEMETISKTKKIEQEEERSVEEDLSISLEGRWNPYKIYETEEIRLNGKEKDEFGFKEKEKNELLWVEKSLLSLLFDYQRWNRPLRYIENDRFSNAVRNEMSQYFFNTCASDGKQIISFTYPPSLSTFFEMIQKKMYFRTAEKLPAEDLSNEWVSTTEKQRDNLRNEFINRIEAIDKGSLILDVVEKRARLCNDEEEQECLPKFYDPLLNGPYRGTIKKGYLYSIRNDSITSIQGSTKISWINKIHGILSKDYREFEHEIYKLDVKSSSAGIDDSSVSIGEFTEEAEEAEESRTRFKQFAFWGEEKEINSENQAEFLFDMVRADPNDQKISNQSIKIEEMKKKVPRWLYKLTADFDFEEEEEEEEEEDDEEEPTDDHGIRSRKAKRVVIYTDTDTDEDTDTNIINTTDSDQAKNSDQAKNSDQAKKSDQAKNSDQAEEHEMALIRYSQQSDFRRDIIKGSMRAQRRKTVTWEMFQTDVHSPLFLDRIDKTPLFSFDISRMMNLIFRNWMEEKSLKLKRKTSDYAGEGAKEEEHEEEKREYKRKEDKRQEDERIAIAEAWDTIPFAQAVRSSLLVTHSILRKYIVLPSLIIVKNIGRMLLFQFPEWYEDFKEWSREMHVKCTYNGVQLSETEFPKDWLTDGIQIKILFPFSLKPWRRSKLRSHHRDLRKKQKNFCFLTVWGVETELPFGSPRKNPFFFEPIHKTLEKKIRKVKKKGFFILKILKDNIKGFLEIFKEKIRWVIKIVLFIKSKVIFFFRLTRVFDPIPNNKDSKISNRIIHESPIRIGSRDWANDSLTERKINDLADKTIKIRDQVEKIMKDKKKKITESQKYIWQISKKRSARLIPKWNSFMKSFIERIYMGILLCITNIYKINVKFFLDSTLDSTKKILNRYTYNDETKEKDTNETNPNIIPFISTIKSLSTYTTTISSNSHSPIYCDLSSLSQAYVFYKLLQTQVSNKYKSESIFQYYRTYPFIKDRIKDYFHNYFHTRGISDSESKHKKLRNSGMNEWKNWLRNHYQYNLSRAKWSGLAPLKWRNKVNQHRTIKNNDLQKLDSYEEKDQLIHSEIKDFYKLGLLKSPSHTKKMKKHYRYDLLSYKYINYEYVKDSNIYGSPLQVNRHGEILSLSNYNTHKYKSFYVITINDCLEDKYIIDTDQNLDRKYFELRIIYFYPRNDIETRTSTDIGTFTKKNKTTKTGTNKKDLYIRIHQEIQTKQKEFFFDWMGMNEQMLDRTISNLDPWFLPEFVPLYDRYRTNPWIIPIKLLLFDFNGNKKSDLYIDPKVKSNQKERSNPKAESNQKEYLELENRNRDEKERQHQGNLISDTRNQKKDVGANSTGSDIKKRRKKKKFKSKKEAELDLLLKKYFLFQLRWGDSFNQRMTNNIKVYCLLLRLMDPSEIAISSIERGEMGLDVMLIHKDLSLPELIKRGIFIIEPVRLSTKWDGISIMYQTIAISLTHKVQHQTNRGYQAKKHIDENYFNGSIACHGGVRVNGDNNNYDLLVPENILSPNHRREFRIISRFNYRNRNVVNKNPVFFNRAKTNAQGFEKFVDRDKHFDTDTNNSLKWKVFLWPTHRLEDLACMNRYWFDTNNGSRFSMSRIHMYQRFGIR</sequence>
<reference key="1">
    <citation type="journal article" date="2007" name="BMC Genomics">
        <title>Comparative chloroplast genomics: analyses including new sequences from the angiosperms Nuphar advena and Ranunculus macranthus.</title>
        <authorList>
            <person name="Raubeson L.A."/>
            <person name="Peery R."/>
            <person name="Chumley T.W."/>
            <person name="Dziubek C."/>
            <person name="Fourcade H.M."/>
            <person name="Boore J.L."/>
            <person name="Jansen R.K."/>
        </authorList>
    </citation>
    <scope>NUCLEOTIDE SEQUENCE [LARGE SCALE GENOMIC DNA]</scope>
</reference>
<gene>
    <name evidence="1" type="primary">TIC214</name>
    <name type="synonym">ycf1</name>
</gene>
<accession>A1XG13</accession>
<evidence type="ECO:0000250" key="1">
    <source>
        <dbReference type="UniProtKB" id="P56785"/>
    </source>
</evidence>
<evidence type="ECO:0000255" key="2"/>
<evidence type="ECO:0000256" key="3">
    <source>
        <dbReference type="SAM" id="MobiDB-lite"/>
    </source>
</evidence>
<evidence type="ECO:0000305" key="4"/>
<keyword id="KW-0150">Chloroplast</keyword>
<keyword id="KW-0472">Membrane</keyword>
<keyword id="KW-0934">Plastid</keyword>
<keyword id="KW-1001">Plastid inner membrane</keyword>
<keyword id="KW-0653">Protein transport</keyword>
<keyword id="KW-0812">Transmembrane</keyword>
<keyword id="KW-1133">Transmembrane helix</keyword>
<keyword id="KW-0813">Transport</keyword>